<dbReference type="EMBL" id="AE001437">
    <property type="protein sequence ID" value="AAK80326.1"/>
    <property type="molecule type" value="Genomic_DNA"/>
</dbReference>
<dbReference type="PIR" id="C97192">
    <property type="entry name" value="C97192"/>
</dbReference>
<dbReference type="RefSeq" id="NP_348986.1">
    <property type="nucleotide sequence ID" value="NC_003030.1"/>
</dbReference>
<dbReference type="RefSeq" id="WP_010965667.1">
    <property type="nucleotide sequence ID" value="NC_003030.1"/>
</dbReference>
<dbReference type="SMR" id="Q97GJ6"/>
<dbReference type="STRING" id="272562.CA_C2370"/>
<dbReference type="GeneID" id="44998851"/>
<dbReference type="KEGG" id="cac:CA_C2370"/>
<dbReference type="PATRIC" id="fig|272562.8.peg.2567"/>
<dbReference type="eggNOG" id="COG1281">
    <property type="taxonomic scope" value="Bacteria"/>
</dbReference>
<dbReference type="HOGENOM" id="CLU_054493_1_0_9"/>
<dbReference type="OrthoDB" id="9776534at2"/>
<dbReference type="Proteomes" id="UP000000814">
    <property type="component" value="Chromosome"/>
</dbReference>
<dbReference type="GO" id="GO:0005737">
    <property type="term" value="C:cytoplasm"/>
    <property type="evidence" value="ECO:0007669"/>
    <property type="project" value="UniProtKB-SubCell"/>
</dbReference>
<dbReference type="GO" id="GO:0044183">
    <property type="term" value="F:protein folding chaperone"/>
    <property type="evidence" value="ECO:0007669"/>
    <property type="project" value="TreeGrafter"/>
</dbReference>
<dbReference type="GO" id="GO:0051082">
    <property type="term" value="F:unfolded protein binding"/>
    <property type="evidence" value="ECO:0007669"/>
    <property type="project" value="UniProtKB-UniRule"/>
</dbReference>
<dbReference type="GO" id="GO:0042026">
    <property type="term" value="P:protein refolding"/>
    <property type="evidence" value="ECO:0007669"/>
    <property type="project" value="TreeGrafter"/>
</dbReference>
<dbReference type="CDD" id="cd00498">
    <property type="entry name" value="Hsp33"/>
    <property type="match status" value="1"/>
</dbReference>
<dbReference type="Gene3D" id="3.55.30.10">
    <property type="entry name" value="Hsp33 domain"/>
    <property type="match status" value="1"/>
</dbReference>
<dbReference type="Gene3D" id="3.90.1280.10">
    <property type="entry name" value="HSP33 redox switch-like"/>
    <property type="match status" value="1"/>
</dbReference>
<dbReference type="HAMAP" id="MF_00117">
    <property type="entry name" value="HslO"/>
    <property type="match status" value="1"/>
</dbReference>
<dbReference type="InterPro" id="IPR000397">
    <property type="entry name" value="Heat_shock_Hsp33"/>
</dbReference>
<dbReference type="InterPro" id="IPR016154">
    <property type="entry name" value="Heat_shock_Hsp33_C"/>
</dbReference>
<dbReference type="InterPro" id="IPR016153">
    <property type="entry name" value="Heat_shock_Hsp33_N"/>
</dbReference>
<dbReference type="NCBIfam" id="NF001033">
    <property type="entry name" value="PRK00114.1"/>
    <property type="match status" value="1"/>
</dbReference>
<dbReference type="PANTHER" id="PTHR30111">
    <property type="entry name" value="33 KDA CHAPERONIN"/>
    <property type="match status" value="1"/>
</dbReference>
<dbReference type="PANTHER" id="PTHR30111:SF1">
    <property type="entry name" value="33 KDA CHAPERONIN"/>
    <property type="match status" value="1"/>
</dbReference>
<dbReference type="Pfam" id="PF01430">
    <property type="entry name" value="HSP33"/>
    <property type="match status" value="1"/>
</dbReference>
<dbReference type="PIRSF" id="PIRSF005261">
    <property type="entry name" value="Heat_shock_Hsp33"/>
    <property type="match status" value="1"/>
</dbReference>
<dbReference type="SUPFAM" id="SSF64397">
    <property type="entry name" value="Hsp33 domain"/>
    <property type="match status" value="1"/>
</dbReference>
<dbReference type="SUPFAM" id="SSF118352">
    <property type="entry name" value="HSP33 redox switch-like"/>
    <property type="match status" value="1"/>
</dbReference>
<name>HSLO_CLOAB</name>
<feature type="chain" id="PRO_0000192170" description="33 kDa chaperonin">
    <location>
        <begin position="1"/>
        <end position="297"/>
    </location>
</feature>
<feature type="disulfide bond" description="Redox-active" evidence="1">
    <location>
        <begin position="239"/>
        <end position="241"/>
    </location>
</feature>
<feature type="disulfide bond" description="Redox-active" evidence="1">
    <location>
        <begin position="272"/>
        <end position="275"/>
    </location>
</feature>
<reference key="1">
    <citation type="journal article" date="2001" name="J. Bacteriol.">
        <title>Genome sequence and comparative analysis of the solvent-producing bacterium Clostridium acetobutylicum.</title>
        <authorList>
            <person name="Noelling J."/>
            <person name="Breton G."/>
            <person name="Omelchenko M.V."/>
            <person name="Makarova K.S."/>
            <person name="Zeng Q."/>
            <person name="Gibson R."/>
            <person name="Lee H.M."/>
            <person name="Dubois J."/>
            <person name="Qiu D."/>
            <person name="Hitti J."/>
            <person name="Wolf Y.I."/>
            <person name="Tatusov R.L."/>
            <person name="Sabathe F."/>
            <person name="Doucette-Stamm L.A."/>
            <person name="Soucaille P."/>
            <person name="Daly M.J."/>
            <person name="Bennett G.N."/>
            <person name="Koonin E.V."/>
            <person name="Smith D.R."/>
        </authorList>
    </citation>
    <scope>NUCLEOTIDE SEQUENCE [LARGE SCALE GENOMIC DNA]</scope>
    <source>
        <strain>ATCC 824 / DSM 792 / JCM 1419 / IAM 19013 / LMG 5710 / NBRC 13948 / NRRL B-527 / VKM B-1787 / 2291 / W</strain>
    </source>
</reference>
<accession>Q97GJ6</accession>
<keyword id="KW-0143">Chaperone</keyword>
<keyword id="KW-0963">Cytoplasm</keyword>
<keyword id="KW-1015">Disulfide bond</keyword>
<keyword id="KW-0676">Redox-active center</keyword>
<keyword id="KW-1185">Reference proteome</keyword>
<keyword id="KW-0862">Zinc</keyword>
<gene>
    <name evidence="1" type="primary">hslO</name>
    <name type="ordered locus">CA_C2370</name>
</gene>
<comment type="function">
    <text evidence="1">Redox regulated molecular chaperone. Protects both thermally unfolding and oxidatively damaged proteins from irreversible aggregation. Plays an important role in the bacterial defense system toward oxidative stress.</text>
</comment>
<comment type="subcellular location">
    <subcellularLocation>
        <location evidence="1">Cytoplasm</location>
    </subcellularLocation>
</comment>
<comment type="PTM">
    <text evidence="1">Under oxidizing conditions two disulfide bonds are formed involving the reactive cysteines. Under reducing conditions zinc is bound to the reactive cysteines and the protein is inactive.</text>
</comment>
<comment type="similarity">
    <text evidence="1">Belongs to the HSP33 family.</text>
</comment>
<evidence type="ECO:0000255" key="1">
    <source>
        <dbReference type="HAMAP-Rule" id="MF_00117"/>
    </source>
</evidence>
<proteinExistence type="inferred from homology"/>
<organism>
    <name type="scientific">Clostridium acetobutylicum (strain ATCC 824 / DSM 792 / JCM 1419 / IAM 19013 / LMG 5710 / NBRC 13948 / NRRL B-527 / VKM B-1787 / 2291 / W)</name>
    <dbReference type="NCBI Taxonomy" id="272562"/>
    <lineage>
        <taxon>Bacteria</taxon>
        <taxon>Bacillati</taxon>
        <taxon>Bacillota</taxon>
        <taxon>Clostridia</taxon>
        <taxon>Eubacteriales</taxon>
        <taxon>Clostridiaceae</taxon>
        <taxon>Clostridium</taxon>
    </lineage>
</organism>
<sequence>MADKLVKATAKNGDVRIIAAITTDMVNEGVKTHKCAPTAAAALGRMLTAGVLMGAQLKAESDSITLKINGGGIAKSVTVTSYSDAHVKGYIANPNADLPVNSQGKLDVGGIIGKNGNLLVIRDMGLKEPYVGQVPIYTGEIGDDIAYYYVNSEQTPSAVGLGVLVDKDLSIKASGGFIIQMMPGADDLVADLITYRLQEIPSITDLIAKGMSVEDILEFIFEDMDLKILDEGIVPEYRCDCSRDRVEKALISIGMKDLKEIYDDGKQEEVVCNFCNKKYVFTNDEVGSLIKRLENNK</sequence>
<protein>
    <recommendedName>
        <fullName evidence="1">33 kDa chaperonin</fullName>
    </recommendedName>
    <alternativeName>
        <fullName evidence="1">Heat shock protein 33 homolog</fullName>
        <shortName evidence="1">HSP33</shortName>
    </alternativeName>
</protein>